<protein>
    <recommendedName>
        <fullName evidence="2">Cysteine desulfurase</fullName>
        <ecNumber evidence="2">2.8.1.7</ecNumber>
    </recommendedName>
    <alternativeName>
        <fullName evidence="2">Nitrogenase metalloclusters biosynthesis protein NifS</fullName>
    </alternativeName>
</protein>
<name>NIFS_FRASE</name>
<gene>
    <name evidence="2" type="primary">nifS</name>
</gene>
<comment type="function">
    <text evidence="2">Catalyzes the removal of elemental sulfur atoms from cysteine to produce alanine. Seems to participate in the biosynthesis of the nitrogenase metalloclusters by providing the inorganic sulfur required for the Fe-S core formation.</text>
</comment>
<comment type="catalytic activity">
    <reaction evidence="2">
        <text>(sulfur carrier)-H + L-cysteine = (sulfur carrier)-SH + L-alanine</text>
        <dbReference type="Rhea" id="RHEA:43892"/>
        <dbReference type="Rhea" id="RHEA-COMP:14737"/>
        <dbReference type="Rhea" id="RHEA-COMP:14739"/>
        <dbReference type="ChEBI" id="CHEBI:29917"/>
        <dbReference type="ChEBI" id="CHEBI:35235"/>
        <dbReference type="ChEBI" id="CHEBI:57972"/>
        <dbReference type="ChEBI" id="CHEBI:64428"/>
        <dbReference type="EC" id="2.8.1.7"/>
    </reaction>
</comment>
<comment type="cofactor">
    <cofactor evidence="2">
        <name>pyridoxal 5'-phosphate</name>
        <dbReference type="ChEBI" id="CHEBI:597326"/>
    </cofactor>
</comment>
<comment type="subunit">
    <text evidence="2">Homodimer.</text>
</comment>
<comment type="similarity">
    <text evidence="5">Belongs to the class-V pyridoxal-phosphate-dependent aminotransferase family. NifS/IscS subfamily.</text>
</comment>
<organism>
    <name type="scientific">Frankia sp. (strain EuIK1)</name>
    <dbReference type="NCBI Taxonomy" id="47227"/>
    <lineage>
        <taxon>Bacteria</taxon>
        <taxon>Bacillati</taxon>
        <taxon>Actinomycetota</taxon>
        <taxon>Actinomycetes</taxon>
        <taxon>Frankiales</taxon>
        <taxon>Frankiaceae</taxon>
        <taxon>Frankia</taxon>
    </lineage>
</organism>
<evidence type="ECO:0000250" key="1">
    <source>
        <dbReference type="UniProtKB" id="O29689"/>
    </source>
</evidence>
<evidence type="ECO:0000250" key="2">
    <source>
        <dbReference type="UniProtKB" id="P05341"/>
    </source>
</evidence>
<evidence type="ECO:0000250" key="3">
    <source>
        <dbReference type="UniProtKB" id="P0A6B9"/>
    </source>
</evidence>
<evidence type="ECO:0000256" key="4">
    <source>
        <dbReference type="SAM" id="MobiDB-lite"/>
    </source>
</evidence>
<evidence type="ECO:0000305" key="5"/>
<proteinExistence type="inferred from homology"/>
<sequence length="419" mass="43333">MIYLDHNATTPVDPRVVEVMLPLFTERFANPASKHAPGQEATRIVERARREVASLAGARPREIVFTSGATEAANLAIGGVLATAEPGRRRILVGATEHPAVLGAADAAVSAGSAVSADGTTAAERIAVHPDGTVDVDDLRRRLGPDVALVAVMAANNETGAVNDPRPLVEAARSAGRCCCADVTQALGRVPVEFERTGVDLAVSSAHKLYGPKGVGALIASKDAWSRLAPRVHGGGQERGLRAGTLNTAGIAGFGAAARIAAESMADDGTRQRALVALLTELLVKRLGPGAVELNGPVRARLPNTVNLRFVGAGADEVQACAPRVAISAGSACSGGGDEPSHVLRAMGRTATEARESLRFSLGRATTTEEIRTAADLVARAVLRVRSLSQSTPIQDEVRDDNRASSNSLNRGSAASKES</sequence>
<accession>Q9Z5X5</accession>
<dbReference type="EC" id="2.8.1.7" evidence="2"/>
<dbReference type="EMBL" id="AF119361">
    <property type="protein sequence ID" value="AAD17272.1"/>
    <property type="molecule type" value="Genomic_DNA"/>
</dbReference>
<dbReference type="SMR" id="Q9Z5X5"/>
<dbReference type="GO" id="GO:0031071">
    <property type="term" value="F:cysteine desulfurase activity"/>
    <property type="evidence" value="ECO:0007669"/>
    <property type="project" value="UniProtKB-EC"/>
</dbReference>
<dbReference type="GO" id="GO:0051536">
    <property type="term" value="F:iron-sulfur cluster binding"/>
    <property type="evidence" value="ECO:0007669"/>
    <property type="project" value="UniProtKB-KW"/>
</dbReference>
<dbReference type="GO" id="GO:0046872">
    <property type="term" value="F:metal ion binding"/>
    <property type="evidence" value="ECO:0007669"/>
    <property type="project" value="UniProtKB-KW"/>
</dbReference>
<dbReference type="GO" id="GO:0009399">
    <property type="term" value="P:nitrogen fixation"/>
    <property type="evidence" value="ECO:0007669"/>
    <property type="project" value="UniProtKB-KW"/>
</dbReference>
<dbReference type="Gene3D" id="1.10.260.50">
    <property type="match status" value="1"/>
</dbReference>
<dbReference type="Gene3D" id="3.90.1150.10">
    <property type="entry name" value="Aspartate Aminotransferase, domain 1"/>
    <property type="match status" value="1"/>
</dbReference>
<dbReference type="Gene3D" id="3.40.640.10">
    <property type="entry name" value="Type I PLP-dependent aspartate aminotransferase-like (Major domain)"/>
    <property type="match status" value="1"/>
</dbReference>
<dbReference type="InterPro" id="IPR000192">
    <property type="entry name" value="Aminotrans_V_dom"/>
</dbReference>
<dbReference type="InterPro" id="IPR020578">
    <property type="entry name" value="Aminotrans_V_PyrdxlP_BS"/>
</dbReference>
<dbReference type="InterPro" id="IPR016454">
    <property type="entry name" value="Cysteine_dSase"/>
</dbReference>
<dbReference type="InterPro" id="IPR015424">
    <property type="entry name" value="PyrdxlP-dep_Trfase"/>
</dbReference>
<dbReference type="InterPro" id="IPR015421">
    <property type="entry name" value="PyrdxlP-dep_Trfase_major"/>
</dbReference>
<dbReference type="InterPro" id="IPR015422">
    <property type="entry name" value="PyrdxlP-dep_Trfase_small"/>
</dbReference>
<dbReference type="PANTHER" id="PTHR11601:SF34">
    <property type="entry name" value="CYSTEINE DESULFURASE"/>
    <property type="match status" value="1"/>
</dbReference>
<dbReference type="PANTHER" id="PTHR11601">
    <property type="entry name" value="CYSTEINE DESULFURYLASE FAMILY MEMBER"/>
    <property type="match status" value="1"/>
</dbReference>
<dbReference type="Pfam" id="PF00266">
    <property type="entry name" value="Aminotran_5"/>
    <property type="match status" value="1"/>
</dbReference>
<dbReference type="PIRSF" id="PIRSF005572">
    <property type="entry name" value="NifS"/>
    <property type="match status" value="1"/>
</dbReference>
<dbReference type="SUPFAM" id="SSF53383">
    <property type="entry name" value="PLP-dependent transferases"/>
    <property type="match status" value="1"/>
</dbReference>
<dbReference type="PROSITE" id="PS00595">
    <property type="entry name" value="AA_TRANSFER_CLASS_5"/>
    <property type="match status" value="1"/>
</dbReference>
<keyword id="KW-0408">Iron</keyword>
<keyword id="KW-0411">Iron-sulfur</keyword>
<keyword id="KW-0479">Metal-binding</keyword>
<keyword id="KW-0535">Nitrogen fixation</keyword>
<keyword id="KW-0663">Pyridoxal phosphate</keyword>
<keyword id="KW-0808">Transferase</keyword>
<reference key="1">
    <citation type="submission" date="1999-01" db="EMBL/GenBank/DDBJ databases">
        <title>Nif-gene organization and nucleotide sequences from Frankia EuIK1 strain.</title>
        <authorList>
            <person name="Chung-Sun A."/>
            <person name="Ji-Tae K."/>
            <person name="Won-Jin K."/>
            <person name="Won-Young Y."/>
        </authorList>
    </citation>
    <scope>NUCLEOTIDE SEQUENCE [GENOMIC DNA]</scope>
</reference>
<feature type="chain" id="PRO_0000150255" description="Cysteine desulfurase">
    <location>
        <begin position="1"/>
        <end position="419"/>
    </location>
</feature>
<feature type="region of interest" description="Disordered" evidence="4">
    <location>
        <begin position="392"/>
        <end position="419"/>
    </location>
</feature>
<feature type="compositionally biased region" description="Polar residues" evidence="4">
    <location>
        <begin position="404"/>
        <end position="413"/>
    </location>
</feature>
<feature type="active site" description="Cysteine persulfide intermediate" evidence="2">
    <location>
        <position position="333"/>
    </location>
</feature>
<feature type="binding site" evidence="3">
    <location>
        <begin position="69"/>
        <end position="70"/>
    </location>
    <ligand>
        <name>pyridoxal 5'-phosphate</name>
        <dbReference type="ChEBI" id="CHEBI:597326"/>
    </ligand>
</feature>
<feature type="binding site" evidence="1">
    <location>
        <position position="157"/>
    </location>
    <ligand>
        <name>pyridoxal 5'-phosphate</name>
        <dbReference type="ChEBI" id="CHEBI:597326"/>
    </ligand>
</feature>
<feature type="binding site" evidence="3">
    <location>
        <position position="185"/>
    </location>
    <ligand>
        <name>pyridoxal 5'-phosphate</name>
        <dbReference type="ChEBI" id="CHEBI:597326"/>
    </ligand>
</feature>
<feature type="binding site" evidence="3">
    <location>
        <begin position="205"/>
        <end position="207"/>
    </location>
    <ligand>
        <name>pyridoxal 5'-phosphate</name>
        <dbReference type="ChEBI" id="CHEBI:597326"/>
    </ligand>
</feature>
<feature type="binding site" evidence="3">
    <location>
        <position position="245"/>
    </location>
    <ligand>
        <name>pyridoxal 5'-phosphate</name>
        <dbReference type="ChEBI" id="CHEBI:597326"/>
    </ligand>
</feature>
<feature type="binding site" description="via persulfide group" evidence="1">
    <location>
        <position position="333"/>
    </location>
    <ligand>
        <name>[2Fe-2S] cluster</name>
        <dbReference type="ChEBI" id="CHEBI:190135"/>
    </ligand>
</feature>
<feature type="modified residue" description="N6-(pyridoxal phosphate)lysine" evidence="3">
    <location>
        <position position="208"/>
    </location>
</feature>